<sequence length="2244" mass="257496">MAHELSISDIIYPECHLDSPIVSGKLISAIEYAQLRHNQPNGDKRLTENIKINLQGKRRSVYISRQSRLGNYIRDNIKNLKEFLHVSYPECNKSLFSLKSPGMTSKLSNIMKKSFKAYNIVSRKIIEMLQNITRNLITQDQKDEVLGIYEQDRLSNIGKYMSQSQWYECFLFWFTIKTEMRAVIKNSQKPKFRSDSCIIHMKDNNMEIVMNPNLVCIYKNDKDGKRCYYLTPEIVLMCCDVLEGRMMIETSIKSDIKYQSLITRSNALWTFIDSLFPIMGNRIYNIVSMIEPLVLALLQLKDEARILRGAFLHHCIKEIHQELIGCGFTDQKTRSIFIDDLLSVMNIDNIHLLAEFFSFFRTFGHPILEAKTAADKVREHMLADKVLEYGPIMKAHAVFCGTIINGYRDRHRGAWPPLYLPSHASKHIIRLKNSGESLTVDDCVKNWESFCGIQFDCFMELKLDSDLSMYMKDKALSPIKEEWDSVYPREVLNYTPPRSTEPRRLVDVFVNDENFDPYNMLEYVLTGDYLTDEQFNVSYSLKEKETKQAGRLFAKMTYKMRACQVIAEALIASGVGKYFKENGMVKDEHELLKTLFQLSISSVPRGNSQGRDSEFSNNTEKSLISLKRTTGRLLNNEVPCRMNIMSALIDKNQSDQKKHNILPNTRNRHKCDNTSQTFLDYHMEFSPYKSDRMDRTETSDFSKYDDGTGTKFDTVSAFLTTDLKKFCLNWRYESMAIFAERLDEIYGLPGFFNWMHKRLEKSVIYVADPNCPPDIGKHINLDDTPEDDIFIHSPKGGIEGYSQKTWTIATIPFLFLSAYETNTRIAAIVQGDNESIAITQKVHPNLPYKVKKEICARQAQLYFDRLRMNLRALGLNLKATETIISTHLFVYSKKIHYDGAVLSQALKSMSRCCFWSETLVDETRSACSNISTTIAKAIENGLSRNVGYCINVLKVIQQLLISTEFSINETLTADVTSPISNNLDWLVTASRIPAPIGGFNYLNLSRIFVRNIGDPVTASLADLKRMIEHDLMTDKVLQKVMNQEPGDASFLDWASDPYSGNLPDSQSITKTIKNITARTILRTSPNPMLKGLFHDKSFEEDLELATFLMDRRIILPRAAHEILDNSLTGAREEIAGLLDTTKGLIRSGLKKSGIQPKLVSRLSNHDYNQFLILNRLLSNKKRNDLISPKTCSVDLAKALRCHMWRDLALGRSIYGLEVPDALEAMTGRYITGSMECQLCDQGNTMYGWFFVPRDSQLDQVNKEHSSIRVPYVGSSTDERSDIKLGNVKRPTRALRSAIRIATVYTWAYGDSEESWYEAWYLASQRVNIDIDVLKAITPVSTSNNLSHRLRDRSTQFKLPGSVLNRVSRYVNISNDNLDFRVEGEKVDTNLIYQQTMLLGLSVLEGKFRLRTETDDYNGIYHLHVRDNCCVKEVADIGGVNAELPVPEYTEVENNRLIYDPDPVSEIDCDRLSKQESKARELDFPLWSTEELHDVLAKTVAQTVLEIITKADKDVLKQHLAIDSDDSINSLITEFLMVDPELFALYLGQSISVKWAFEIHHRRPHGRHTMVDLLSDLISNTSKHTYKVLSNALSHPRVFKRFVNCGLLLPTQGPYLHQQDFEKLSQNLLITSYMNYLMNWCDFKKFPFLIAEQDEAVVELREDIITSKHLCMIIDLYANHHKPPWIIDLNPQEKICVLRDFISKCRHTDVSSRSWNITDLDFMVFYASLTYLRRGIIKQLRIRQVTEVIDTTTMLRDNILVENPPIKTGVLDIRGCIIYNLEEILSMNTKSTSRKVFNLGSKLSVENHKYRRIGLNSSSCYKALNLSPLIQRYLPAGSQRLFVGEGSGSMMLLYQQTLGCSISFYNSGIDGDYIPGQRELRLFPSEYSIAEDDPSQSDKLKGLVVPLFNGRPETTWIGNLDSYEYIINRTAGRNIGLVHSDMESGIDKQVEEIMIEHSHLISIAINVMIEDGVLVSKIAFAPGFPISRLLNMYRSYFGLVLVCFPVYSNPESTEVYLICLQKTIKTIIPPQKVLDHSYLSDEINDQGITSVIFKIKNIQSKQFHEDLVKHYQVEQPFFVPSHITCDEKLLMQAGLKMNGPEILKNEVGYDIGSDINTLRSTIIILLNEAMNYFDDERSPSHHLEPFPVLEKTRVKTIMGRVTRKVTVYSLIKLKETKSPELYNIKNYIRRKVLILDFRSHTMIKLLPKGMKERREKSGFKEIWIFDLSNREVKIWWKIIGYLSLV</sequence>
<organism>
    <name type="scientific">Hendra virus (isolate Horse/Autralia/Hendra/1994)</name>
    <dbReference type="NCBI Taxonomy" id="928303"/>
    <lineage>
        <taxon>Viruses</taxon>
        <taxon>Riboviria</taxon>
        <taxon>Orthornavirae</taxon>
        <taxon>Negarnaviricota</taxon>
        <taxon>Haploviricotina</taxon>
        <taxon>Monjiviricetes</taxon>
        <taxon>Mononegavirales</taxon>
        <taxon>Paramyxoviridae</taxon>
        <taxon>Orthoparamyxovirinae</taxon>
        <taxon>Henipavirus</taxon>
        <taxon>Henipavirus hendraense</taxon>
    </lineage>
</organism>
<organismHost>
    <name type="scientific">Equus caballus</name>
    <name type="common">Horse</name>
    <dbReference type="NCBI Taxonomy" id="9796"/>
</organismHost>
<organismHost>
    <name type="scientific">Homo sapiens</name>
    <name type="common">Human</name>
    <dbReference type="NCBI Taxonomy" id="9606"/>
</organismHost>
<organismHost>
    <name type="scientific">Pteropus alecto</name>
    <name type="common">Black flying fox</name>
    <dbReference type="NCBI Taxonomy" id="9402"/>
</organismHost>
<organismHost>
    <name type="scientific">Pteropus poliocephalus</name>
    <name type="common">Grey-headed flying fox</name>
    <dbReference type="NCBI Taxonomy" id="9403"/>
</organismHost>
<organismHost>
    <name type="scientific">Pteropus scapulatus</name>
    <name type="common">Little red flying fox</name>
    <dbReference type="NCBI Taxonomy" id="94117"/>
</organismHost>
<comment type="function">
    <text evidence="2">RNA-directed RNA polymerase that catalyzes the transcription of viral mRNAs, their capping and polyadenylation. The template is composed of the viral RNA tightly encapsidated by the nucleoprotein (N). The viral polymerase binds to the genomic RNA at the 3' leader promoter, and transcribes subsequently all viral mRNAs with a decreasing efficiency. The first gene is the most transcribed, and the last the least transcribed. The viral phosphoprotein acts as a processivity factor. Capping is concomitant with initiation of mRNA transcription. Indeed, a GDP polyribonucleotidyl transferase (PRNTase) adds the cap structure when the nascent RNA chain length has reached few nucleotides. Ribose 2'-O methylation of viral mRNA cap precedes and facilitates subsequent guanine-N-7 methylation, both activities being carried by the viral polymerase. Polyadenylation of mRNAs occur by a stuttering mechanism at a slipery stop site present at the end viral genes. After finishing transcription of a mRNA, the polymerase can resume transcription of the downstream gene.</text>
</comment>
<comment type="function">
    <text evidence="2">RNA-directed RNA polymerase that catalyzes the replication of viral genomic RNA. The template is composed of the viral RNA tightly encapsidated by the nucleoprotein (N). The replicase mode is dependent on intracellular N protein concentration. In this mode, the polymerase replicates the whole viral genome without recognizing transcriptional signals, and the replicated genome is not caped or polyadenylated.</text>
</comment>
<comment type="catalytic activity">
    <reaction evidence="5">
        <text>RNA(n) + a ribonucleoside 5'-triphosphate = RNA(n+1) + diphosphate</text>
        <dbReference type="Rhea" id="RHEA:21248"/>
        <dbReference type="Rhea" id="RHEA-COMP:14527"/>
        <dbReference type="Rhea" id="RHEA-COMP:17342"/>
        <dbReference type="ChEBI" id="CHEBI:33019"/>
        <dbReference type="ChEBI" id="CHEBI:61557"/>
        <dbReference type="ChEBI" id="CHEBI:140395"/>
        <dbReference type="EC" id="2.7.7.48"/>
    </reaction>
</comment>
<comment type="catalytic activity">
    <reaction evidence="2">
        <text>a 5'-end (5'-triphosphoguanosine)-adenylyl-adenylyl-cytidylyl-adenosine in mRNA + 2 S-adenosyl-L-methionine = a 5'-end (N(7)-methyl 5'-triphosphoguanosine)-(2'-O-methyladenylyl)-adenylyl-cytidylyl-adenosine in mRNA + 2 S-adenosyl-L-homocysteine + H(+)</text>
        <dbReference type="Rhea" id="RHEA:65376"/>
        <dbReference type="Rhea" id="RHEA-COMP:16797"/>
        <dbReference type="Rhea" id="RHEA-COMP:16798"/>
        <dbReference type="ChEBI" id="CHEBI:15378"/>
        <dbReference type="ChEBI" id="CHEBI:57856"/>
        <dbReference type="ChEBI" id="CHEBI:59789"/>
        <dbReference type="ChEBI" id="CHEBI:156483"/>
        <dbReference type="ChEBI" id="CHEBI:156484"/>
        <dbReference type="EC" id="2.1.1.375"/>
    </reaction>
</comment>
<comment type="catalytic activity">
    <reaction evidence="2">
        <text>a 5'-end (5'-triphosphoguanosine)-adenylyl-adenylyl-cytidylyl-adenosine in mRNA + S-adenosyl-L-methionine = a 5'-end (5'-triphosphoguanosine)-(2'-O-methyladenylyl)-adenylyl-cytidylyl-adenosine in mRNA + S-adenosyl-L-homocysteine + H(+)</text>
        <dbReference type="Rhea" id="RHEA:65380"/>
        <dbReference type="Rhea" id="RHEA-COMP:16797"/>
        <dbReference type="Rhea" id="RHEA-COMP:16801"/>
        <dbReference type="ChEBI" id="CHEBI:15378"/>
        <dbReference type="ChEBI" id="CHEBI:57856"/>
        <dbReference type="ChEBI" id="CHEBI:59789"/>
        <dbReference type="ChEBI" id="CHEBI:156482"/>
        <dbReference type="ChEBI" id="CHEBI:156484"/>
    </reaction>
</comment>
<comment type="catalytic activity">
    <reaction evidence="3">
        <text>a 5'-end triphospho-adenylyl-adenylyl-cytidylyl-adenosine in mRNA + GDP + H(+) = a 5'-end (5'-triphosphoguanosine)-adenylyl-adenylyl-cytidylyl-adenosine in mRNA + diphosphate</text>
        <dbReference type="Rhea" id="RHEA:65436"/>
        <dbReference type="Rhea" id="RHEA-COMP:16797"/>
        <dbReference type="Rhea" id="RHEA-COMP:16799"/>
        <dbReference type="ChEBI" id="CHEBI:15378"/>
        <dbReference type="ChEBI" id="CHEBI:33019"/>
        <dbReference type="ChEBI" id="CHEBI:58189"/>
        <dbReference type="ChEBI" id="CHEBI:156484"/>
        <dbReference type="ChEBI" id="CHEBI:156503"/>
        <dbReference type="EC" id="2.7.7.88"/>
    </reaction>
</comment>
<comment type="catalytic activity">
    <reaction evidence="2">
        <text>a 5'-end (5'-triphosphoguanosine)-(2'-O-methyladenylyl)-adenylyl-cytidylyl-adenosine in mRNA + S-adenosyl-L-methionine = a 5'-end (N(7)-methyl 5'-triphosphoguanosine)-(2'-O-methyladenylyl)-adenylyl-cytidylyl-adenosine in mRNA + S-adenosyl-L-homocysteine</text>
        <dbReference type="Rhea" id="RHEA:65440"/>
        <dbReference type="Rhea" id="RHEA-COMP:16798"/>
        <dbReference type="Rhea" id="RHEA-COMP:16801"/>
        <dbReference type="ChEBI" id="CHEBI:57856"/>
        <dbReference type="ChEBI" id="CHEBI:59789"/>
        <dbReference type="ChEBI" id="CHEBI:156482"/>
        <dbReference type="ChEBI" id="CHEBI:156483"/>
    </reaction>
</comment>
<comment type="catalytic activity">
    <reaction evidence="3">
        <text>GTP + H2O = GDP + phosphate + H(+)</text>
        <dbReference type="Rhea" id="RHEA:19669"/>
        <dbReference type="ChEBI" id="CHEBI:15377"/>
        <dbReference type="ChEBI" id="CHEBI:15378"/>
        <dbReference type="ChEBI" id="CHEBI:37565"/>
        <dbReference type="ChEBI" id="CHEBI:43474"/>
        <dbReference type="ChEBI" id="CHEBI:58189"/>
    </reaction>
</comment>
<comment type="subunit">
    <text evidence="1">Interacts with the P protein.</text>
</comment>
<comment type="subcellular location">
    <subcellularLocation>
        <location evidence="7">Virion</location>
    </subcellularLocation>
    <subcellularLocation>
        <location evidence="1">Host cytoplasm</location>
    </subcellularLocation>
</comment>
<comment type="similarity">
    <text evidence="7">Belongs to the paramyxovirus L protein family.</text>
</comment>
<reference key="1">
    <citation type="journal article" date="2000" name="J. Virol.">
        <title>The exceptionally large genome of Hendra virus: support for creation of a new genus within the family Paramyxoviridae.</title>
        <authorList>
            <person name="Wang L.-F."/>
            <person name="Yu M."/>
            <person name="Hansson E."/>
            <person name="Pritchard L.I."/>
            <person name="Shiell B."/>
            <person name="Michalski W.P."/>
            <person name="Eaton B.T."/>
        </authorList>
    </citation>
    <scope>NUCLEOTIDE SEQUENCE [GENOMIC RNA]</scope>
</reference>
<reference key="2">
    <citation type="submission" date="2013-08" db="EMBL/GenBank/DDBJ databases">
        <authorList>
            <person name="Wang L.-F."/>
            <person name="Yu M."/>
            <person name="Pritchard L.I."/>
            <person name="Hansson E."/>
            <person name="Eaton B.T."/>
        </authorList>
    </citation>
    <scope>SEQUENCE REVISION TO 1299-1325</scope>
</reference>
<accession>O89344</accession>
<proteinExistence type="inferred from homology"/>
<protein>
    <recommendedName>
        <fullName>RNA-directed RNA polymerase L</fullName>
        <shortName>Protein L</shortName>
    </recommendedName>
    <alternativeName>
        <fullName>Large structural protein</fullName>
    </alternativeName>
    <alternativeName>
        <fullName>Replicase</fullName>
    </alternativeName>
    <alternativeName>
        <fullName>Transcriptase</fullName>
    </alternativeName>
    <domain>
        <recommendedName>
            <fullName>RNA-directed RNA polymerase</fullName>
            <ecNumber evidence="3">2.7.7.48</ecNumber>
        </recommendedName>
    </domain>
    <domain>
        <recommendedName>
            <fullName evidence="2">GTP phosphohydrolase</fullName>
            <ecNumber evidence="2">3.6.1.-</ecNumber>
        </recommendedName>
    </domain>
    <domain>
        <recommendedName>
            <fullName evidence="7">GDP polyribonucleotidyltransferase</fullName>
            <ecNumber evidence="2">2.7.7.88</ecNumber>
        </recommendedName>
        <alternativeName>
            <fullName evidence="7">PRNTase</fullName>
        </alternativeName>
    </domain>
    <domain>
        <recommendedName>
            <fullName evidence="7">mRNA cap methyltransferase</fullName>
            <ecNumber evidence="2">2.1.1.375</ecNumber>
        </recommendedName>
        <alternativeName>
            <fullName evidence="2">mRNA (guanine-N(7)-)-methyltransferase</fullName>
            <shortName evidence="2">G-N7-MTase</shortName>
        </alternativeName>
        <alternativeName>
            <fullName evidence="2">mRNA (nucleoside-2'-O-)-methyltransferase</fullName>
            <shortName evidence="2">N1-2'-O-MTase</shortName>
        </alternativeName>
    </domain>
</protein>
<keyword id="KW-0067">ATP-binding</keyword>
<keyword id="KW-1035">Host cytoplasm</keyword>
<keyword id="KW-0378">Hydrolase</keyword>
<keyword id="KW-0489">Methyltransferase</keyword>
<keyword id="KW-0506">mRNA capping</keyword>
<keyword id="KW-0507">mRNA processing</keyword>
<keyword id="KW-0511">Multifunctional enzyme</keyword>
<keyword id="KW-0547">Nucleotide-binding</keyword>
<keyword id="KW-0548">Nucleotidyltransferase</keyword>
<keyword id="KW-1185">Reference proteome</keyword>
<keyword id="KW-0696">RNA-directed RNA polymerase</keyword>
<keyword id="KW-0949">S-adenosyl-L-methionine</keyword>
<keyword id="KW-0808">Transferase</keyword>
<keyword id="KW-0693">Viral RNA replication</keyword>
<keyword id="KW-0946">Virion</keyword>
<name>L_HENDH</name>
<feature type="chain" id="PRO_0000236010" description="RNA-directed RNA polymerase L">
    <location>
        <begin position="1"/>
        <end position="2244"/>
    </location>
</feature>
<feature type="domain" description="RdRp catalytic" evidence="5">
    <location>
        <begin position="715"/>
        <end position="899"/>
    </location>
</feature>
<feature type="domain" description="Mononegavirus-type SAM-dependent 2'-O-MTase" evidence="6">
    <location>
        <begin position="1810"/>
        <end position="2017"/>
    </location>
</feature>
<feature type="binding site" evidence="4">
    <location>
        <begin position="1840"/>
        <end position="1849"/>
    </location>
    <ligand>
        <name>ATP</name>
        <dbReference type="ChEBI" id="CHEBI:30616"/>
    </ligand>
</feature>
<dbReference type="EC" id="2.7.7.48" evidence="3"/>
<dbReference type="EC" id="3.6.1.-" evidence="2"/>
<dbReference type="EC" id="2.7.7.88" evidence="2"/>
<dbReference type="EC" id="2.1.1.375" evidence="2"/>
<dbReference type="EMBL" id="AF017149">
    <property type="protein sequence ID" value="AAC83194.3"/>
    <property type="molecule type" value="Genomic_RNA"/>
</dbReference>
<dbReference type="PIR" id="T08212">
    <property type="entry name" value="T08212"/>
</dbReference>
<dbReference type="SMR" id="O89344"/>
<dbReference type="KEGG" id="vg:1446468"/>
<dbReference type="Proteomes" id="UP000008771">
    <property type="component" value="Segment"/>
</dbReference>
<dbReference type="GO" id="GO:0030430">
    <property type="term" value="C:host cell cytoplasm"/>
    <property type="evidence" value="ECO:0007669"/>
    <property type="project" value="UniProtKB-SubCell"/>
</dbReference>
<dbReference type="GO" id="GO:0044423">
    <property type="term" value="C:virion component"/>
    <property type="evidence" value="ECO:0007669"/>
    <property type="project" value="UniProtKB-KW"/>
</dbReference>
<dbReference type="GO" id="GO:0005524">
    <property type="term" value="F:ATP binding"/>
    <property type="evidence" value="ECO:0007669"/>
    <property type="project" value="UniProtKB-KW"/>
</dbReference>
<dbReference type="GO" id="GO:0003924">
    <property type="term" value="F:GTPase activity"/>
    <property type="evidence" value="ECO:0007669"/>
    <property type="project" value="RHEA"/>
</dbReference>
<dbReference type="GO" id="GO:0004482">
    <property type="term" value="F:mRNA 5'-cap (guanine-N7-)-methyltransferase activity"/>
    <property type="evidence" value="ECO:0007669"/>
    <property type="project" value="InterPro"/>
</dbReference>
<dbReference type="GO" id="GO:0003968">
    <property type="term" value="F:RNA-directed RNA polymerase activity"/>
    <property type="evidence" value="ECO:0007669"/>
    <property type="project" value="UniProtKB-KW"/>
</dbReference>
<dbReference type="Gene3D" id="3.40.50.150">
    <property type="entry name" value="Vaccinia Virus protein VP39"/>
    <property type="match status" value="1"/>
</dbReference>
<dbReference type="InterPro" id="IPR039736">
    <property type="entry name" value="L_poly_C"/>
</dbReference>
<dbReference type="InterPro" id="IPR026890">
    <property type="entry name" value="Mononeg_mRNAcap"/>
</dbReference>
<dbReference type="InterPro" id="IPR014023">
    <property type="entry name" value="Mononeg_RNA_pol_cat"/>
</dbReference>
<dbReference type="InterPro" id="IPR025786">
    <property type="entry name" value="Mononega_L_MeTrfase"/>
</dbReference>
<dbReference type="InterPro" id="IPR016269">
    <property type="entry name" value="RNA-dir_pol_paramyxovirus"/>
</dbReference>
<dbReference type="InterPro" id="IPR002877">
    <property type="entry name" value="RNA_MeTrfase_FtsJ_dom"/>
</dbReference>
<dbReference type="InterPro" id="IPR029063">
    <property type="entry name" value="SAM-dependent_MTases_sf"/>
</dbReference>
<dbReference type="NCBIfam" id="TIGR04198">
    <property type="entry name" value="paramyx_RNAcap"/>
    <property type="match status" value="1"/>
</dbReference>
<dbReference type="Pfam" id="PF01728">
    <property type="entry name" value="FtsJ"/>
    <property type="match status" value="1"/>
</dbReference>
<dbReference type="Pfam" id="PF14318">
    <property type="entry name" value="Mononeg_mRNAcap"/>
    <property type="match status" value="1"/>
</dbReference>
<dbReference type="Pfam" id="PF00946">
    <property type="entry name" value="Mononeg_RNA_pol"/>
    <property type="match status" value="1"/>
</dbReference>
<dbReference type="PIRSF" id="PIRSF000830">
    <property type="entry name" value="RNA_pol_ParamyxoV"/>
    <property type="match status" value="1"/>
</dbReference>
<dbReference type="PROSITE" id="PS50526">
    <property type="entry name" value="RDRP_SSRNA_NEG_NONSEG"/>
    <property type="match status" value="1"/>
</dbReference>
<dbReference type="PROSITE" id="PS51590">
    <property type="entry name" value="SAM_MT_MNV_L"/>
    <property type="match status" value="1"/>
</dbReference>
<gene>
    <name type="primary">L</name>
</gene>
<evidence type="ECO:0000250" key="1"/>
<evidence type="ECO:0000250" key="2">
    <source>
        <dbReference type="UniProtKB" id="P03523"/>
    </source>
</evidence>
<evidence type="ECO:0000250" key="3">
    <source>
        <dbReference type="UniProtKB" id="P28887"/>
    </source>
</evidence>
<evidence type="ECO:0000255" key="4"/>
<evidence type="ECO:0000255" key="5">
    <source>
        <dbReference type="PROSITE-ProRule" id="PRU00539"/>
    </source>
</evidence>
<evidence type="ECO:0000255" key="6">
    <source>
        <dbReference type="PROSITE-ProRule" id="PRU00923"/>
    </source>
</evidence>
<evidence type="ECO:0000305" key="7"/>